<comment type="function">
    <text evidence="2">Is essential for L-lactate degradation and allows cells to grow with lactate as the sole carbon source. Has probably a role as an electron transporter during oxidation of L-lactate. May also allow cells to utilize an alternative carbon source during biofilm formation, since it contributes to the formation of architecturally complex communities when lactate is present.</text>
</comment>
<comment type="induction">
    <text evidence="2">Is under the dual control of the transcriptional repressors LutR and SinR, which allows the lutABC operon to be induced during both growth in liquid culture and biofilm formation. Is induced by L-lactate, which relieves LutR repression.</text>
</comment>
<comment type="disruption phenotype">
    <text evidence="2">Cells lacking this gene are unable to grow on minimal medium with L-lactate as the sole carbon source. Cells lacking the lutABC operon exhibit little or no defect in biofilm formation on MSgg medium, but form small colonies that almost completely lacked surface architecture when glycerol is replaced with L-lactate in the MSgg medium.</text>
</comment>
<comment type="similarity">
    <text evidence="3">Belongs to the LutB/YkgF family.</text>
</comment>
<name>LUTB_BACSU</name>
<organism>
    <name type="scientific">Bacillus subtilis (strain 168)</name>
    <dbReference type="NCBI Taxonomy" id="224308"/>
    <lineage>
        <taxon>Bacteria</taxon>
        <taxon>Bacillati</taxon>
        <taxon>Bacillota</taxon>
        <taxon>Bacilli</taxon>
        <taxon>Bacillales</taxon>
        <taxon>Bacillaceae</taxon>
        <taxon>Bacillus</taxon>
    </lineage>
</organism>
<dbReference type="EMBL" id="AL009126">
    <property type="protein sequence ID" value="CAB15409.1"/>
    <property type="molecule type" value="Genomic_DNA"/>
</dbReference>
<dbReference type="PIR" id="F70039">
    <property type="entry name" value="F70039"/>
</dbReference>
<dbReference type="RefSeq" id="NP_391284.1">
    <property type="nucleotide sequence ID" value="NC_000964.3"/>
</dbReference>
<dbReference type="RefSeq" id="WP_003228307.1">
    <property type="nucleotide sequence ID" value="NZ_OZ025638.1"/>
</dbReference>
<dbReference type="FunCoup" id="O07021">
    <property type="interactions" value="34"/>
</dbReference>
<dbReference type="IntAct" id="O07021">
    <property type="interactions" value="1"/>
</dbReference>
<dbReference type="MINT" id="O07021"/>
<dbReference type="STRING" id="224308.BSU34040"/>
<dbReference type="jPOST" id="O07021"/>
<dbReference type="PaxDb" id="224308-BSU34040"/>
<dbReference type="DNASU" id="938159"/>
<dbReference type="EnsemblBacteria" id="CAB15409">
    <property type="protein sequence ID" value="CAB15409"/>
    <property type="gene ID" value="BSU_34040"/>
</dbReference>
<dbReference type="GeneID" id="938159"/>
<dbReference type="KEGG" id="bsu:BSU34040"/>
<dbReference type="PATRIC" id="fig|224308.179.peg.3690"/>
<dbReference type="eggNOG" id="COG1139">
    <property type="taxonomic scope" value="Bacteria"/>
</dbReference>
<dbReference type="InParanoid" id="O07021"/>
<dbReference type="OrthoDB" id="9782337at2"/>
<dbReference type="PhylomeDB" id="O07021"/>
<dbReference type="BioCyc" id="BSUB:BSU34040-MONOMER"/>
<dbReference type="BioCyc" id="MetaCyc:BSU34040-MONOMER"/>
<dbReference type="Proteomes" id="UP000001570">
    <property type="component" value="Chromosome"/>
</dbReference>
<dbReference type="GO" id="GO:0051539">
    <property type="term" value="F:4 iron, 4 sulfur cluster binding"/>
    <property type="evidence" value="ECO:0007669"/>
    <property type="project" value="UniProtKB-KW"/>
</dbReference>
<dbReference type="GO" id="GO:0004459">
    <property type="term" value="F:L-lactate dehydrogenase activity"/>
    <property type="evidence" value="ECO:0000318"/>
    <property type="project" value="GO_Central"/>
</dbReference>
<dbReference type="GO" id="GO:0046872">
    <property type="term" value="F:metal ion binding"/>
    <property type="evidence" value="ECO:0007669"/>
    <property type="project" value="UniProtKB-KW"/>
</dbReference>
<dbReference type="GO" id="GO:1903457">
    <property type="term" value="P:lactate catabolic process"/>
    <property type="evidence" value="ECO:0000318"/>
    <property type="project" value="GO_Central"/>
</dbReference>
<dbReference type="Gene3D" id="1.10.1060.10">
    <property type="entry name" value="Alpha-helical ferredoxin"/>
    <property type="match status" value="1"/>
</dbReference>
<dbReference type="Gene3D" id="3.40.50.10420">
    <property type="entry name" value="NagB/RpiA/CoA transferase-like"/>
    <property type="match status" value="1"/>
</dbReference>
<dbReference type="HAMAP" id="MF_02103">
    <property type="entry name" value="LutB"/>
    <property type="match status" value="1"/>
</dbReference>
<dbReference type="InterPro" id="IPR017896">
    <property type="entry name" value="4Fe4S_Fe-S-bd"/>
</dbReference>
<dbReference type="InterPro" id="IPR017900">
    <property type="entry name" value="4Fe4S_Fe_S_CS"/>
</dbReference>
<dbReference type="InterPro" id="IPR024185">
    <property type="entry name" value="FTHF_cligase-like_sf"/>
</dbReference>
<dbReference type="InterPro" id="IPR009051">
    <property type="entry name" value="Helical_ferredxn"/>
</dbReference>
<dbReference type="InterPro" id="IPR003741">
    <property type="entry name" value="LUD_dom"/>
</dbReference>
<dbReference type="InterPro" id="IPR022825">
    <property type="entry name" value="LutB"/>
</dbReference>
<dbReference type="InterPro" id="IPR004452">
    <property type="entry name" value="LutB/LldF"/>
</dbReference>
<dbReference type="InterPro" id="IPR024569">
    <property type="entry name" value="LutB_C"/>
</dbReference>
<dbReference type="InterPro" id="IPR037171">
    <property type="entry name" value="NagB/RpiA_transferase-like"/>
</dbReference>
<dbReference type="NCBIfam" id="TIGR00273">
    <property type="entry name" value="LutB/LldF family L-lactate oxidation iron-sulfur protein"/>
    <property type="match status" value="1"/>
</dbReference>
<dbReference type="PANTHER" id="PTHR47153">
    <property type="entry name" value="LACTATE UTILIZATION PROTEIN B"/>
    <property type="match status" value="1"/>
</dbReference>
<dbReference type="PANTHER" id="PTHR47153:SF2">
    <property type="entry name" value="LACTATE UTILIZATION PROTEIN B"/>
    <property type="match status" value="1"/>
</dbReference>
<dbReference type="Pfam" id="PF13183">
    <property type="entry name" value="Fer4_8"/>
    <property type="match status" value="1"/>
</dbReference>
<dbReference type="Pfam" id="PF02589">
    <property type="entry name" value="LUD_dom"/>
    <property type="match status" value="1"/>
</dbReference>
<dbReference type="Pfam" id="PF11870">
    <property type="entry name" value="LutB_C"/>
    <property type="match status" value="1"/>
</dbReference>
<dbReference type="SUPFAM" id="SSF46548">
    <property type="entry name" value="alpha-helical ferredoxin"/>
    <property type="match status" value="1"/>
</dbReference>
<dbReference type="SUPFAM" id="SSF100950">
    <property type="entry name" value="NagB/RpiA/CoA transferase-like"/>
    <property type="match status" value="1"/>
</dbReference>
<dbReference type="PROSITE" id="PS00198">
    <property type="entry name" value="4FE4S_FER_1"/>
    <property type="match status" value="1"/>
</dbReference>
<proteinExistence type="evidence at protein level"/>
<sequence>MAMKIGTDAFKERVSQGIDNEFMRGAVSGAQERLRTRRLEAAEELGNWEEWRSLSEEIRQHVLENLDFYLGQLAENVAKRGGHVYFAKTAEEASSYIRDVIQKKNGKKIVKSKSMVTEEINLNEVLEKEGCEVVETDLGEYILQIDDHDPPSHIVAPALHKNKEQIRDVFKERLDYQHTEKPEELVMHARAILRKKFLEADIGITGCNFAIADTGSVSLVTNEGNGRLVSTLPKTQITVMGMERIVPSFSEFEVLVSMLTRSAVGQRLTSYITALTGPKLEGEVDGPEEFHLVIVDNGRSNILGTEFQSVLQCIRCAACINVCPVYRHVGGHSYGSIYSGPIGAVLSPLLGGYDDYKELPYASSLCAACSEACPVKIPLHELLLKHRQNIVEKEGRAPISEKLAMKAFGLGASSLSLYKMGSKWAPAAMTPFTEDEKISKGPGPLKNWTQIRDFPAPHKSRFRDWFADRETSERTKEEQ</sequence>
<accession>O07021</accession>
<keyword id="KW-0004">4Fe-4S</keyword>
<keyword id="KW-0249">Electron transport</keyword>
<keyword id="KW-0408">Iron</keyword>
<keyword id="KW-0411">Iron-sulfur</keyword>
<keyword id="KW-0479">Metal-binding</keyword>
<keyword id="KW-1185">Reference proteome</keyword>
<keyword id="KW-0677">Repeat</keyword>
<keyword id="KW-0813">Transport</keyword>
<reference key="1">
    <citation type="journal article" date="1997" name="Nature">
        <title>The complete genome sequence of the Gram-positive bacterium Bacillus subtilis.</title>
        <authorList>
            <person name="Kunst F."/>
            <person name="Ogasawara N."/>
            <person name="Moszer I."/>
            <person name="Albertini A.M."/>
            <person name="Alloni G."/>
            <person name="Azevedo V."/>
            <person name="Bertero M.G."/>
            <person name="Bessieres P."/>
            <person name="Bolotin A."/>
            <person name="Borchert S."/>
            <person name="Borriss R."/>
            <person name="Boursier L."/>
            <person name="Brans A."/>
            <person name="Braun M."/>
            <person name="Brignell S.C."/>
            <person name="Bron S."/>
            <person name="Brouillet S."/>
            <person name="Bruschi C.V."/>
            <person name="Caldwell B."/>
            <person name="Capuano V."/>
            <person name="Carter N.M."/>
            <person name="Choi S.-K."/>
            <person name="Codani J.-J."/>
            <person name="Connerton I.F."/>
            <person name="Cummings N.J."/>
            <person name="Daniel R.A."/>
            <person name="Denizot F."/>
            <person name="Devine K.M."/>
            <person name="Duesterhoeft A."/>
            <person name="Ehrlich S.D."/>
            <person name="Emmerson P.T."/>
            <person name="Entian K.-D."/>
            <person name="Errington J."/>
            <person name="Fabret C."/>
            <person name="Ferrari E."/>
            <person name="Foulger D."/>
            <person name="Fritz C."/>
            <person name="Fujita M."/>
            <person name="Fujita Y."/>
            <person name="Fuma S."/>
            <person name="Galizzi A."/>
            <person name="Galleron N."/>
            <person name="Ghim S.-Y."/>
            <person name="Glaser P."/>
            <person name="Goffeau A."/>
            <person name="Golightly E.J."/>
            <person name="Grandi G."/>
            <person name="Guiseppi G."/>
            <person name="Guy B.J."/>
            <person name="Haga K."/>
            <person name="Haiech J."/>
            <person name="Harwood C.R."/>
            <person name="Henaut A."/>
            <person name="Hilbert H."/>
            <person name="Holsappel S."/>
            <person name="Hosono S."/>
            <person name="Hullo M.-F."/>
            <person name="Itaya M."/>
            <person name="Jones L.-M."/>
            <person name="Joris B."/>
            <person name="Karamata D."/>
            <person name="Kasahara Y."/>
            <person name="Klaerr-Blanchard M."/>
            <person name="Klein C."/>
            <person name="Kobayashi Y."/>
            <person name="Koetter P."/>
            <person name="Koningstein G."/>
            <person name="Krogh S."/>
            <person name="Kumano M."/>
            <person name="Kurita K."/>
            <person name="Lapidus A."/>
            <person name="Lardinois S."/>
            <person name="Lauber J."/>
            <person name="Lazarevic V."/>
            <person name="Lee S.-M."/>
            <person name="Levine A."/>
            <person name="Liu H."/>
            <person name="Masuda S."/>
            <person name="Mauel C."/>
            <person name="Medigue C."/>
            <person name="Medina N."/>
            <person name="Mellado R.P."/>
            <person name="Mizuno M."/>
            <person name="Moestl D."/>
            <person name="Nakai S."/>
            <person name="Noback M."/>
            <person name="Noone D."/>
            <person name="O'Reilly M."/>
            <person name="Ogawa K."/>
            <person name="Ogiwara A."/>
            <person name="Oudega B."/>
            <person name="Park S.-H."/>
            <person name="Parro V."/>
            <person name="Pohl T.M."/>
            <person name="Portetelle D."/>
            <person name="Porwollik S."/>
            <person name="Prescott A.M."/>
            <person name="Presecan E."/>
            <person name="Pujic P."/>
            <person name="Purnelle B."/>
            <person name="Rapoport G."/>
            <person name="Rey M."/>
            <person name="Reynolds S."/>
            <person name="Rieger M."/>
            <person name="Rivolta C."/>
            <person name="Rocha E."/>
            <person name="Roche B."/>
            <person name="Rose M."/>
            <person name="Sadaie Y."/>
            <person name="Sato T."/>
            <person name="Scanlan E."/>
            <person name="Schleich S."/>
            <person name="Schroeter R."/>
            <person name="Scoffone F."/>
            <person name="Sekiguchi J."/>
            <person name="Sekowska A."/>
            <person name="Seror S.J."/>
            <person name="Serror P."/>
            <person name="Shin B.-S."/>
            <person name="Soldo B."/>
            <person name="Sorokin A."/>
            <person name="Tacconi E."/>
            <person name="Takagi T."/>
            <person name="Takahashi H."/>
            <person name="Takemaru K."/>
            <person name="Takeuchi M."/>
            <person name="Tamakoshi A."/>
            <person name="Tanaka T."/>
            <person name="Terpstra P."/>
            <person name="Tognoni A."/>
            <person name="Tosato V."/>
            <person name="Uchiyama S."/>
            <person name="Vandenbol M."/>
            <person name="Vannier F."/>
            <person name="Vassarotti A."/>
            <person name="Viari A."/>
            <person name="Wambutt R."/>
            <person name="Wedler E."/>
            <person name="Wedler H."/>
            <person name="Weitzenegger T."/>
            <person name="Winters P."/>
            <person name="Wipat A."/>
            <person name="Yamamoto H."/>
            <person name="Yamane K."/>
            <person name="Yasumoto K."/>
            <person name="Yata K."/>
            <person name="Yoshida K."/>
            <person name="Yoshikawa H.-F."/>
            <person name="Zumstein E."/>
            <person name="Yoshikawa H."/>
            <person name="Danchin A."/>
        </authorList>
    </citation>
    <scope>NUCLEOTIDE SEQUENCE [LARGE SCALE GENOMIC DNA]</scope>
    <source>
        <strain>168</strain>
    </source>
</reference>
<reference key="2">
    <citation type="journal article" date="2009" name="J. Bacteriol.">
        <title>A widely conserved gene cluster required for lactate utilization in Bacillus subtilis and its involvement in biofilm formation.</title>
        <authorList>
            <person name="Chai Y."/>
            <person name="Kolter R."/>
            <person name="Losick R."/>
        </authorList>
    </citation>
    <scope>FUNCTION IN LACTATE UTILIZATION</scope>
    <scope>INDUCTION</scope>
    <scope>DISRUPTION PHENOTYPE</scope>
    <source>
        <strain>3610</strain>
    </source>
</reference>
<protein>
    <recommendedName>
        <fullName>Lactate utilization protein B</fullName>
    </recommendedName>
</protein>
<gene>
    <name type="primary">lutB</name>
    <name type="synonym">yvfW</name>
    <name type="ordered locus">BSU34040</name>
</gene>
<evidence type="ECO:0000250" key="1"/>
<evidence type="ECO:0000269" key="2">
    <source>
    </source>
</evidence>
<evidence type="ECO:0000305" key="3"/>
<feature type="chain" id="PRO_0000360418" description="Lactate utilization protein B">
    <location>
        <begin position="1"/>
        <end position="479"/>
    </location>
</feature>
<feature type="domain" description="4Fe-4S ferredoxin-type 1">
    <location>
        <begin position="304"/>
        <end position="334"/>
    </location>
</feature>
<feature type="domain" description="4Fe-4S ferredoxin-type 2">
    <location>
        <begin position="353"/>
        <end position="382"/>
    </location>
</feature>
<feature type="binding site" evidence="1">
    <location>
        <position position="313"/>
    </location>
    <ligand>
        <name>[4Fe-4S] cluster</name>
        <dbReference type="ChEBI" id="CHEBI:49883"/>
        <label>1</label>
    </ligand>
</feature>
<feature type="binding site" evidence="1">
    <location>
        <position position="316"/>
    </location>
    <ligand>
        <name>[4Fe-4S] cluster</name>
        <dbReference type="ChEBI" id="CHEBI:49883"/>
        <label>1</label>
    </ligand>
</feature>
<feature type="binding site" evidence="1">
    <location>
        <position position="319"/>
    </location>
    <ligand>
        <name>[4Fe-4S] cluster</name>
        <dbReference type="ChEBI" id="CHEBI:49883"/>
        <label>1</label>
    </ligand>
</feature>
<feature type="binding site" evidence="1">
    <location>
        <position position="323"/>
    </location>
    <ligand>
        <name>[4Fe-4S] cluster</name>
        <dbReference type="ChEBI" id="CHEBI:49883"/>
        <label>2</label>
    </ligand>
</feature>
<feature type="binding site" evidence="1">
    <location>
        <position position="366"/>
    </location>
    <ligand>
        <name>[4Fe-4S] cluster</name>
        <dbReference type="ChEBI" id="CHEBI:49883"/>
        <label>2</label>
    </ligand>
</feature>
<feature type="binding site" evidence="1">
    <location>
        <position position="369"/>
    </location>
    <ligand>
        <name>[4Fe-4S] cluster</name>
        <dbReference type="ChEBI" id="CHEBI:49883"/>
        <label>2</label>
    </ligand>
</feature>
<feature type="binding site" evidence="1">
    <location>
        <position position="373"/>
    </location>
    <ligand>
        <name>[4Fe-4S] cluster</name>
        <dbReference type="ChEBI" id="CHEBI:49883"/>
        <label>1</label>
    </ligand>
</feature>